<reference key="1">
    <citation type="journal article" date="2000" name="Proc. Natl. Acad. Sci. U.S.A.">
        <title>Genome sequence of Halobacterium species NRC-1.</title>
        <authorList>
            <person name="Ng W.V."/>
            <person name="Kennedy S.P."/>
            <person name="Mahairas G.G."/>
            <person name="Berquist B."/>
            <person name="Pan M."/>
            <person name="Shukla H.D."/>
            <person name="Lasky S.R."/>
            <person name="Baliga N.S."/>
            <person name="Thorsson V."/>
            <person name="Sbrogna J."/>
            <person name="Swartzell S."/>
            <person name="Weir D."/>
            <person name="Hall J."/>
            <person name="Dahl T.A."/>
            <person name="Welti R."/>
            <person name="Goo Y.A."/>
            <person name="Leithauser B."/>
            <person name="Keller K."/>
            <person name="Cruz R."/>
            <person name="Danson M.J."/>
            <person name="Hough D.W."/>
            <person name="Maddocks D.G."/>
            <person name="Jablonski P.E."/>
            <person name="Krebs M.P."/>
            <person name="Angevine C.M."/>
            <person name="Dale H."/>
            <person name="Isenbarger T.A."/>
            <person name="Peck R.F."/>
            <person name="Pohlschroder M."/>
            <person name="Spudich J.L."/>
            <person name="Jung K.-H."/>
            <person name="Alam M."/>
            <person name="Freitas T."/>
            <person name="Hou S."/>
            <person name="Daniels C.J."/>
            <person name="Dennis P.P."/>
            <person name="Omer A.D."/>
            <person name="Ebhardt H."/>
            <person name="Lowe T.M."/>
            <person name="Liang P."/>
            <person name="Riley M."/>
            <person name="Hood L."/>
            <person name="DasSarma S."/>
        </authorList>
    </citation>
    <scope>NUCLEOTIDE SEQUENCE [LARGE SCALE GENOMIC DNA]</scope>
    <source>
        <strain>ATCC 700922 / JCM 11081 / NRC-1</strain>
    </source>
</reference>
<organism>
    <name type="scientific">Halobacterium salinarum (strain ATCC 700922 / JCM 11081 / NRC-1)</name>
    <name type="common">Halobacterium halobium</name>
    <dbReference type="NCBI Taxonomy" id="64091"/>
    <lineage>
        <taxon>Archaea</taxon>
        <taxon>Methanobacteriati</taxon>
        <taxon>Methanobacteriota</taxon>
        <taxon>Stenosarchaea group</taxon>
        <taxon>Halobacteria</taxon>
        <taxon>Halobacteriales</taxon>
        <taxon>Halobacteriaceae</taxon>
        <taxon>Halobacterium</taxon>
        <taxon>Halobacterium salinarum NRC-34001</taxon>
    </lineage>
</organism>
<protein>
    <recommendedName>
        <fullName evidence="1">Serine hydroxymethyltransferase</fullName>
        <shortName evidence="1">SHMT</shortName>
        <shortName evidence="1">Serine methylase</shortName>
        <ecNumber evidence="1">2.1.2.1</ecNumber>
    </recommendedName>
</protein>
<feature type="chain" id="PRO_0000113711" description="Serine hydroxymethyltransferase">
    <location>
        <begin position="1"/>
        <end position="415"/>
    </location>
</feature>
<feature type="binding site" evidence="1">
    <location>
        <position position="119"/>
    </location>
    <ligand>
        <name>(6S)-5,6,7,8-tetrahydrofolate</name>
        <dbReference type="ChEBI" id="CHEBI:57453"/>
    </ligand>
</feature>
<feature type="binding site" evidence="1">
    <location>
        <begin position="123"/>
        <end position="125"/>
    </location>
    <ligand>
        <name>(6S)-5,6,7,8-tetrahydrofolate</name>
        <dbReference type="ChEBI" id="CHEBI:57453"/>
    </ligand>
</feature>
<feature type="binding site" evidence="1">
    <location>
        <begin position="353"/>
        <end position="355"/>
    </location>
    <ligand>
        <name>(6S)-5,6,7,8-tetrahydrofolate</name>
        <dbReference type="ChEBI" id="CHEBI:57453"/>
    </ligand>
</feature>
<feature type="site" description="Plays an important role in substrate specificity" evidence="1">
    <location>
        <position position="227"/>
    </location>
</feature>
<feature type="modified residue" description="N6-(pyridoxal phosphate)lysine" evidence="1">
    <location>
        <position position="228"/>
    </location>
</feature>
<proteinExistence type="inferred from homology"/>
<sequence>MAYDEVREVDPEVADALTGERHRQNDTLAMIASENHVSEAVMEAQSSELTNKYAEGYPGSRYYGGCEYADDVEELAVARAKELFGADHVNVQPHSGSSANMGVYFATLAPGDKILSLDLTHGGHLSHGHPANFAGQLYEVEQYEVDAETGRLDYEALREHADAFEPDMIVSGFSAYPREVEWERIQAAADAVGALHMADIAHITGLVAAGEHASPVGVADFVTGSTHKTIRAGRGGIVMCDEAFADDIDSAVFPGAQGGPLMHNIAGKAVGFNEALDPAFEEYAAQVVENAAVLGERLQEHGFSLVSGGTDTHLVLVDLRESHPDISGGDVEGELEDVGIVLNANTVPDETRSAFDPSGIRIGTPALTTRGFDADAMETVADCIARVIDNLGDESVYADVADTVADLCEQYPQYE</sequence>
<gene>
    <name evidence="1" type="primary">glyA</name>
    <name type="ordered locus">VNG_1414G</name>
</gene>
<dbReference type="EC" id="2.1.2.1" evidence="1"/>
<dbReference type="EMBL" id="AE004437">
    <property type="protein sequence ID" value="AAG19732.1"/>
    <property type="status" value="ALT_INIT"/>
    <property type="molecule type" value="Genomic_DNA"/>
</dbReference>
<dbReference type="PIR" id="H84295">
    <property type="entry name" value="H84295"/>
</dbReference>
<dbReference type="RefSeq" id="WP_012289325.1">
    <property type="nucleotide sequence ID" value="NC_002607.1"/>
</dbReference>
<dbReference type="SMR" id="Q9HPY5"/>
<dbReference type="FunCoup" id="Q9HPY5">
    <property type="interactions" value="225"/>
</dbReference>
<dbReference type="STRING" id="64091.VNG_1414G"/>
<dbReference type="PaxDb" id="64091-VNG_1414G"/>
<dbReference type="GeneID" id="68694140"/>
<dbReference type="KEGG" id="hal:VNG_1414G"/>
<dbReference type="PATRIC" id="fig|64091.14.peg.1082"/>
<dbReference type="HOGENOM" id="CLU_022477_2_1_2"/>
<dbReference type="InParanoid" id="Q9HPY5"/>
<dbReference type="OrthoDB" id="5821at2157"/>
<dbReference type="PhylomeDB" id="Q9HPY5"/>
<dbReference type="UniPathway" id="UPA00193"/>
<dbReference type="UniPathway" id="UPA00288">
    <property type="reaction ID" value="UER01023"/>
</dbReference>
<dbReference type="Proteomes" id="UP000000554">
    <property type="component" value="Chromosome"/>
</dbReference>
<dbReference type="GO" id="GO:0005737">
    <property type="term" value="C:cytoplasm"/>
    <property type="evidence" value="ECO:0000318"/>
    <property type="project" value="GO_Central"/>
</dbReference>
<dbReference type="GO" id="GO:0004372">
    <property type="term" value="F:glycine hydroxymethyltransferase activity"/>
    <property type="evidence" value="ECO:0000318"/>
    <property type="project" value="GO_Central"/>
</dbReference>
<dbReference type="GO" id="GO:0030170">
    <property type="term" value="F:pyridoxal phosphate binding"/>
    <property type="evidence" value="ECO:0000318"/>
    <property type="project" value="GO_Central"/>
</dbReference>
<dbReference type="GO" id="GO:0019264">
    <property type="term" value="P:glycine biosynthetic process from serine"/>
    <property type="evidence" value="ECO:0000318"/>
    <property type="project" value="GO_Central"/>
</dbReference>
<dbReference type="GO" id="GO:0035999">
    <property type="term" value="P:tetrahydrofolate interconversion"/>
    <property type="evidence" value="ECO:0007669"/>
    <property type="project" value="UniProtKB-UniRule"/>
</dbReference>
<dbReference type="GO" id="GO:0046653">
    <property type="term" value="P:tetrahydrofolate metabolic process"/>
    <property type="evidence" value="ECO:0000318"/>
    <property type="project" value="GO_Central"/>
</dbReference>
<dbReference type="CDD" id="cd00378">
    <property type="entry name" value="SHMT"/>
    <property type="match status" value="1"/>
</dbReference>
<dbReference type="FunFam" id="3.40.640.10:FF:000001">
    <property type="entry name" value="Serine hydroxymethyltransferase"/>
    <property type="match status" value="1"/>
</dbReference>
<dbReference type="Gene3D" id="3.90.1150.10">
    <property type="entry name" value="Aspartate Aminotransferase, domain 1"/>
    <property type="match status" value="1"/>
</dbReference>
<dbReference type="Gene3D" id="3.40.640.10">
    <property type="entry name" value="Type I PLP-dependent aspartate aminotransferase-like (Major domain)"/>
    <property type="match status" value="1"/>
</dbReference>
<dbReference type="HAMAP" id="MF_00051">
    <property type="entry name" value="SHMT"/>
    <property type="match status" value="1"/>
</dbReference>
<dbReference type="InterPro" id="IPR015424">
    <property type="entry name" value="PyrdxlP-dep_Trfase"/>
</dbReference>
<dbReference type="InterPro" id="IPR015421">
    <property type="entry name" value="PyrdxlP-dep_Trfase_major"/>
</dbReference>
<dbReference type="InterPro" id="IPR015422">
    <property type="entry name" value="PyrdxlP-dep_Trfase_small"/>
</dbReference>
<dbReference type="InterPro" id="IPR001085">
    <property type="entry name" value="Ser_HO-MeTrfase"/>
</dbReference>
<dbReference type="InterPro" id="IPR049943">
    <property type="entry name" value="Ser_HO-MeTrfase-like"/>
</dbReference>
<dbReference type="InterPro" id="IPR019798">
    <property type="entry name" value="Ser_HO-MeTrfase_PLP_BS"/>
</dbReference>
<dbReference type="InterPro" id="IPR039429">
    <property type="entry name" value="SHMT-like_dom"/>
</dbReference>
<dbReference type="NCBIfam" id="NF000586">
    <property type="entry name" value="PRK00011.1"/>
    <property type="match status" value="1"/>
</dbReference>
<dbReference type="PANTHER" id="PTHR11680">
    <property type="entry name" value="SERINE HYDROXYMETHYLTRANSFERASE"/>
    <property type="match status" value="1"/>
</dbReference>
<dbReference type="PANTHER" id="PTHR11680:SF35">
    <property type="entry name" value="SERINE HYDROXYMETHYLTRANSFERASE 1"/>
    <property type="match status" value="1"/>
</dbReference>
<dbReference type="Pfam" id="PF00464">
    <property type="entry name" value="SHMT"/>
    <property type="match status" value="1"/>
</dbReference>
<dbReference type="PIRSF" id="PIRSF000412">
    <property type="entry name" value="SHMT"/>
    <property type="match status" value="1"/>
</dbReference>
<dbReference type="SUPFAM" id="SSF53383">
    <property type="entry name" value="PLP-dependent transferases"/>
    <property type="match status" value="1"/>
</dbReference>
<dbReference type="PROSITE" id="PS00096">
    <property type="entry name" value="SHMT"/>
    <property type="match status" value="1"/>
</dbReference>
<name>GLYA_HALSA</name>
<keyword id="KW-0028">Amino-acid biosynthesis</keyword>
<keyword id="KW-0963">Cytoplasm</keyword>
<keyword id="KW-0554">One-carbon metabolism</keyword>
<keyword id="KW-0663">Pyridoxal phosphate</keyword>
<keyword id="KW-1185">Reference proteome</keyword>
<keyword id="KW-0808">Transferase</keyword>
<comment type="function">
    <text evidence="1">Catalyzes the reversible interconversion of serine and glycine with tetrahydrofolate (THF) serving as the one-carbon carrier. Also exhibits THF-independent aldolase activity toward beta-hydroxyamino acids, producing glycine and aldehydes, via a retro-aldol mechanism.</text>
</comment>
<comment type="catalytic activity">
    <reaction evidence="1">
        <text>(6R)-5,10-methylene-5,6,7,8-tetrahydrofolate + glycine + H2O = (6S)-5,6,7,8-tetrahydrofolate + L-serine</text>
        <dbReference type="Rhea" id="RHEA:15481"/>
        <dbReference type="ChEBI" id="CHEBI:15377"/>
        <dbReference type="ChEBI" id="CHEBI:15636"/>
        <dbReference type="ChEBI" id="CHEBI:33384"/>
        <dbReference type="ChEBI" id="CHEBI:57305"/>
        <dbReference type="ChEBI" id="CHEBI:57453"/>
        <dbReference type="EC" id="2.1.2.1"/>
    </reaction>
</comment>
<comment type="cofactor">
    <cofactor evidence="1">
        <name>pyridoxal 5'-phosphate</name>
        <dbReference type="ChEBI" id="CHEBI:597326"/>
    </cofactor>
</comment>
<comment type="pathway">
    <text evidence="1">One-carbon metabolism; tetrahydrofolate interconversion.</text>
</comment>
<comment type="pathway">
    <text evidence="1">Amino-acid biosynthesis; glycine biosynthesis; glycine from L-serine: step 1/1.</text>
</comment>
<comment type="subunit">
    <text evidence="1">Homodimer.</text>
</comment>
<comment type="subcellular location">
    <subcellularLocation>
        <location evidence="1">Cytoplasm</location>
    </subcellularLocation>
</comment>
<comment type="similarity">
    <text evidence="1">Belongs to the SHMT family.</text>
</comment>
<comment type="sequence caution" evidence="2">
    <conflict type="erroneous initiation">
        <sequence resource="EMBL-CDS" id="AAG19732"/>
    </conflict>
    <text>Extended N-terminus.</text>
</comment>
<evidence type="ECO:0000255" key="1">
    <source>
        <dbReference type="HAMAP-Rule" id="MF_00051"/>
    </source>
</evidence>
<evidence type="ECO:0000305" key="2"/>
<accession>Q9HPY5</accession>